<keyword id="KW-0997">Cell inner membrane</keyword>
<keyword id="KW-1003">Cell membrane</keyword>
<keyword id="KW-0249">Electron transport</keyword>
<keyword id="KW-0285">Flavoprotein</keyword>
<keyword id="KW-0288">FMN</keyword>
<keyword id="KW-0472">Membrane</keyword>
<keyword id="KW-0597">Phosphoprotein</keyword>
<keyword id="KW-1185">Reference proteome</keyword>
<keyword id="KW-1278">Translocase</keyword>
<keyword id="KW-0812">Transmembrane</keyword>
<keyword id="KW-1133">Transmembrane helix</keyword>
<keyword id="KW-0813">Transport</keyword>
<sequence length="207" mass="22908">MGTVKITSRYGILLGFIALLCTIISAGIFFLTKDKIDAVIAAQQRELLLQVIPQDYFNNNLLESAVIPQDKNFVGIQKIYFAKKDGNVSAYAYETTAPDGYSGDIRLLVGLDPKGEVLGVRVIEHHETPGLGDKIERRISNWILGFTNQSINEHNLSEWAVKKDGGKFDQFSGATITPRAVVNQTKRSALIMLNNQALLQQLSTQVK</sequence>
<reference key="1">
    <citation type="journal article" date="1995" name="Science">
        <title>Whole-genome random sequencing and assembly of Haemophilus influenzae Rd.</title>
        <authorList>
            <person name="Fleischmann R.D."/>
            <person name="Adams M.D."/>
            <person name="White O."/>
            <person name="Clayton R.A."/>
            <person name="Kirkness E.F."/>
            <person name="Kerlavage A.R."/>
            <person name="Bult C.J."/>
            <person name="Tomb J.-F."/>
            <person name="Dougherty B.A."/>
            <person name="Merrick J.M."/>
            <person name="McKenney K."/>
            <person name="Sutton G.G."/>
            <person name="FitzHugh W."/>
            <person name="Fields C.A."/>
            <person name="Gocayne J.D."/>
            <person name="Scott J.D."/>
            <person name="Shirley R."/>
            <person name="Liu L.-I."/>
            <person name="Glodek A."/>
            <person name="Kelley J.M."/>
            <person name="Weidman J.F."/>
            <person name="Phillips C.A."/>
            <person name="Spriggs T."/>
            <person name="Hedblom E."/>
            <person name="Cotton M.D."/>
            <person name="Utterback T.R."/>
            <person name="Hanna M.C."/>
            <person name="Nguyen D.T."/>
            <person name="Saudek D.M."/>
            <person name="Brandon R.C."/>
            <person name="Fine L.D."/>
            <person name="Fritchman J.L."/>
            <person name="Fuhrmann J.L."/>
            <person name="Geoghagen N.S.M."/>
            <person name="Gnehm C.L."/>
            <person name="McDonald L.A."/>
            <person name="Small K.V."/>
            <person name="Fraser C.M."/>
            <person name="Smith H.O."/>
            <person name="Venter J.C."/>
        </authorList>
    </citation>
    <scope>NUCLEOTIDE SEQUENCE [LARGE SCALE GENOMIC DNA]</scope>
    <source>
        <strain>ATCC 51907 / DSM 11121 / KW20 / Rd</strain>
    </source>
</reference>
<comment type="function">
    <text evidence="1">Part of a membrane-bound complex that couples electron transfer with translocation of ions across the membrane.</text>
</comment>
<comment type="cofactor">
    <cofactor evidence="1">
        <name>FMN</name>
        <dbReference type="ChEBI" id="CHEBI:58210"/>
    </cofactor>
</comment>
<comment type="subunit">
    <text evidence="1">The complex is composed of six subunits: RnfA, RnfB, RnfC, RnfD, RnfE and RnfG.</text>
</comment>
<comment type="subcellular location">
    <subcellularLocation>
        <location evidence="1">Cell inner membrane</location>
        <topology evidence="1">Single-pass membrane protein</topology>
    </subcellularLocation>
</comment>
<comment type="similarity">
    <text evidence="1">Belongs to the RnfG family.</text>
</comment>
<dbReference type="EC" id="7.-.-.-" evidence="1"/>
<dbReference type="EMBL" id="L42023">
    <property type="protein sequence ID" value="AAC23333.1"/>
    <property type="molecule type" value="Genomic_DNA"/>
</dbReference>
<dbReference type="PIR" id="D64040">
    <property type="entry name" value="D64040"/>
</dbReference>
<dbReference type="RefSeq" id="NP_439829.1">
    <property type="nucleotide sequence ID" value="NC_000907.1"/>
</dbReference>
<dbReference type="SMR" id="P44291"/>
<dbReference type="STRING" id="71421.HI_1687"/>
<dbReference type="EnsemblBacteria" id="AAC23333">
    <property type="protein sequence ID" value="AAC23333"/>
    <property type="gene ID" value="HI_1687"/>
</dbReference>
<dbReference type="KEGG" id="hin:HI_1687"/>
<dbReference type="PATRIC" id="fig|71421.8.peg.1766"/>
<dbReference type="eggNOG" id="COG4659">
    <property type="taxonomic scope" value="Bacteria"/>
</dbReference>
<dbReference type="HOGENOM" id="CLU_077882_1_0_6"/>
<dbReference type="OrthoDB" id="9784165at2"/>
<dbReference type="PhylomeDB" id="P44291"/>
<dbReference type="BioCyc" id="HINF71421:G1GJ1-1703-MONOMER"/>
<dbReference type="Proteomes" id="UP000000579">
    <property type="component" value="Chromosome"/>
</dbReference>
<dbReference type="GO" id="GO:1990204">
    <property type="term" value="C:oxidoreductase complex"/>
    <property type="evidence" value="ECO:0000318"/>
    <property type="project" value="GO_Central"/>
</dbReference>
<dbReference type="GO" id="GO:0005886">
    <property type="term" value="C:plasma membrane"/>
    <property type="evidence" value="ECO:0000318"/>
    <property type="project" value="GO_Central"/>
</dbReference>
<dbReference type="GO" id="GO:0009055">
    <property type="term" value="F:electron transfer activity"/>
    <property type="evidence" value="ECO:0007669"/>
    <property type="project" value="InterPro"/>
</dbReference>
<dbReference type="GO" id="GO:0010181">
    <property type="term" value="F:FMN binding"/>
    <property type="evidence" value="ECO:0007669"/>
    <property type="project" value="InterPro"/>
</dbReference>
<dbReference type="GO" id="GO:0016651">
    <property type="term" value="F:oxidoreductase activity, acting on NAD(P)H"/>
    <property type="evidence" value="ECO:0000318"/>
    <property type="project" value="GO_Central"/>
</dbReference>
<dbReference type="GO" id="GO:0022900">
    <property type="term" value="P:electron transport chain"/>
    <property type="evidence" value="ECO:0007669"/>
    <property type="project" value="UniProtKB-UniRule"/>
</dbReference>
<dbReference type="HAMAP" id="MF_00479">
    <property type="entry name" value="RsxG_RnfG"/>
    <property type="match status" value="1"/>
</dbReference>
<dbReference type="InterPro" id="IPR007329">
    <property type="entry name" value="FMN-bd"/>
</dbReference>
<dbReference type="InterPro" id="IPR010209">
    <property type="entry name" value="Ion_transpt_RnfG/RsxG"/>
</dbReference>
<dbReference type="NCBIfam" id="NF002519">
    <property type="entry name" value="PRK01908.1"/>
    <property type="match status" value="1"/>
</dbReference>
<dbReference type="NCBIfam" id="TIGR01947">
    <property type="entry name" value="rnfG"/>
    <property type="match status" value="1"/>
</dbReference>
<dbReference type="PANTHER" id="PTHR36118">
    <property type="entry name" value="ION-TRANSLOCATING OXIDOREDUCTASE COMPLEX SUBUNIT G"/>
    <property type="match status" value="1"/>
</dbReference>
<dbReference type="PANTHER" id="PTHR36118:SF1">
    <property type="entry name" value="ION-TRANSLOCATING OXIDOREDUCTASE COMPLEX SUBUNIT G"/>
    <property type="match status" value="1"/>
</dbReference>
<dbReference type="Pfam" id="PF04205">
    <property type="entry name" value="FMN_bind"/>
    <property type="match status" value="1"/>
</dbReference>
<dbReference type="PIRSF" id="PIRSF006091">
    <property type="entry name" value="E_trnsport_RnfG"/>
    <property type="match status" value="1"/>
</dbReference>
<dbReference type="SMART" id="SM00900">
    <property type="entry name" value="FMN_bind"/>
    <property type="match status" value="1"/>
</dbReference>
<accession>P44291</accession>
<protein>
    <recommendedName>
        <fullName evidence="1">Ion-translocating oxidoreductase complex subunit G</fullName>
        <ecNumber evidence="1">7.-.-.-</ecNumber>
    </recommendedName>
    <alternativeName>
        <fullName evidence="1">Rnf electron transport complex subunit G</fullName>
    </alternativeName>
</protein>
<feature type="chain" id="PRO_0000214635" description="Ion-translocating oxidoreductase complex subunit G">
    <location>
        <begin position="1"/>
        <end position="207"/>
    </location>
</feature>
<feature type="transmembrane region" description="Helical" evidence="1">
    <location>
        <begin position="11"/>
        <end position="31"/>
    </location>
</feature>
<feature type="modified residue" description="FMN phosphoryl threonine" evidence="1">
    <location>
        <position position="175"/>
    </location>
</feature>
<proteinExistence type="inferred from homology"/>
<organism>
    <name type="scientific">Haemophilus influenzae (strain ATCC 51907 / DSM 11121 / KW20 / Rd)</name>
    <dbReference type="NCBI Taxonomy" id="71421"/>
    <lineage>
        <taxon>Bacteria</taxon>
        <taxon>Pseudomonadati</taxon>
        <taxon>Pseudomonadota</taxon>
        <taxon>Gammaproteobacteria</taxon>
        <taxon>Pasteurellales</taxon>
        <taxon>Pasteurellaceae</taxon>
        <taxon>Haemophilus</taxon>
    </lineage>
</organism>
<gene>
    <name evidence="1" type="primary">rnfG</name>
    <name type="ordered locus">HI_1687</name>
</gene>
<evidence type="ECO:0000255" key="1">
    <source>
        <dbReference type="HAMAP-Rule" id="MF_00479"/>
    </source>
</evidence>
<name>RNFG_HAEIN</name>